<evidence type="ECO:0000255" key="1">
    <source>
        <dbReference type="HAMAP-Rule" id="MF_00197"/>
    </source>
</evidence>
<reference key="1">
    <citation type="journal article" date="2007" name="J. Bacteriol.">
        <title>The complete genome sequence of Bacillus thuringiensis Al Hakam.</title>
        <authorList>
            <person name="Challacombe J.F."/>
            <person name="Altherr M.R."/>
            <person name="Xie G."/>
            <person name="Bhotika S.S."/>
            <person name="Brown N."/>
            <person name="Bruce D."/>
            <person name="Campbell C.S."/>
            <person name="Campbell M.L."/>
            <person name="Chen J."/>
            <person name="Chertkov O."/>
            <person name="Cleland C."/>
            <person name="Dimitrijevic M."/>
            <person name="Doggett N.A."/>
            <person name="Fawcett J.J."/>
            <person name="Glavina T."/>
            <person name="Goodwin L.A."/>
            <person name="Green L.D."/>
            <person name="Han C.S."/>
            <person name="Hill K.K."/>
            <person name="Hitchcock P."/>
            <person name="Jackson P.J."/>
            <person name="Keim P."/>
            <person name="Kewalramani A.R."/>
            <person name="Longmire J."/>
            <person name="Lucas S."/>
            <person name="Malfatti S."/>
            <person name="Martinez D."/>
            <person name="McMurry K."/>
            <person name="Meincke L.J."/>
            <person name="Misra M."/>
            <person name="Moseman B.L."/>
            <person name="Mundt M."/>
            <person name="Munk A.C."/>
            <person name="Okinaka R.T."/>
            <person name="Parson-Quintana B."/>
            <person name="Reilly L.P."/>
            <person name="Richardson P."/>
            <person name="Robinson D.L."/>
            <person name="Saunders E."/>
            <person name="Tapia R."/>
            <person name="Tesmer J.G."/>
            <person name="Thayer N."/>
            <person name="Thompson L.S."/>
            <person name="Tice H."/>
            <person name="Ticknor L.O."/>
            <person name="Wills P.L."/>
            <person name="Gilna P."/>
            <person name="Brettin T.S."/>
        </authorList>
    </citation>
    <scope>NUCLEOTIDE SEQUENCE [LARGE SCALE GENOMIC DNA]</scope>
    <source>
        <strain>Al Hakam</strain>
    </source>
</reference>
<feature type="chain" id="PRO_1000011836" description="Diaminopimelate epimerase">
    <location>
        <begin position="1"/>
        <end position="288"/>
    </location>
</feature>
<feature type="active site" description="Proton donor" evidence="1">
    <location>
        <position position="76"/>
    </location>
</feature>
<feature type="active site" description="Proton acceptor" evidence="1">
    <location>
        <position position="226"/>
    </location>
</feature>
<feature type="binding site" evidence="1">
    <location>
        <position position="14"/>
    </location>
    <ligand>
        <name>substrate</name>
    </ligand>
</feature>
<feature type="binding site" evidence="1">
    <location>
        <position position="67"/>
    </location>
    <ligand>
        <name>substrate</name>
    </ligand>
</feature>
<feature type="binding site" evidence="1">
    <location>
        <begin position="77"/>
        <end position="78"/>
    </location>
    <ligand>
        <name>substrate</name>
    </ligand>
</feature>
<feature type="binding site" evidence="1">
    <location>
        <position position="166"/>
    </location>
    <ligand>
        <name>substrate</name>
    </ligand>
</feature>
<feature type="binding site" evidence="1">
    <location>
        <position position="199"/>
    </location>
    <ligand>
        <name>substrate</name>
    </ligand>
</feature>
<feature type="binding site" evidence="1">
    <location>
        <begin position="217"/>
        <end position="218"/>
    </location>
    <ligand>
        <name>substrate</name>
    </ligand>
</feature>
<feature type="binding site" evidence="1">
    <location>
        <begin position="227"/>
        <end position="228"/>
    </location>
    <ligand>
        <name>substrate</name>
    </ligand>
</feature>
<feature type="site" description="Could be important to modulate the pK values of the two catalytic cysteine residues" evidence="1">
    <location>
        <position position="168"/>
    </location>
</feature>
<feature type="site" description="Could be important to modulate the pK values of the two catalytic cysteine residues" evidence="1">
    <location>
        <position position="217"/>
    </location>
</feature>
<accession>A0RKC7</accession>
<sequence length="288" mass="31584">MSQFSFTKMHGLGNSYIYVNMFEEQIPEEDLALVAEKVSNINTGIGADGMILICPSDVAPVKMRMFNNDGSEGKSCGNGLRCVAKYAYEHKLVEDTVFTIETLAGIVTAEVTVEEGKVTLAKIDMGAPRLTRAEIPMLGEGETPFIRENFLYNNHRYAFTAVSMGNSHAVIFVDDVEQAPLTTLGPVLETHEMFPERVNVEFIEILNEEEMNFRVWERGSGVTQACGTGACAAVVASILNGKMERGKEITVHLAGGDLMIAWTEEGNVLMKGPAEVICHGVYEYKIEA</sequence>
<gene>
    <name evidence="1" type="primary">dapF</name>
    <name type="ordered locus">BALH_4473</name>
</gene>
<organism>
    <name type="scientific">Bacillus thuringiensis (strain Al Hakam)</name>
    <dbReference type="NCBI Taxonomy" id="412694"/>
    <lineage>
        <taxon>Bacteria</taxon>
        <taxon>Bacillati</taxon>
        <taxon>Bacillota</taxon>
        <taxon>Bacilli</taxon>
        <taxon>Bacillales</taxon>
        <taxon>Bacillaceae</taxon>
        <taxon>Bacillus</taxon>
        <taxon>Bacillus cereus group</taxon>
    </lineage>
</organism>
<name>DAPF_BACAH</name>
<protein>
    <recommendedName>
        <fullName evidence="1">Diaminopimelate epimerase</fullName>
        <shortName evidence="1">DAP epimerase</shortName>
        <ecNumber evidence="1">5.1.1.7</ecNumber>
    </recommendedName>
    <alternativeName>
        <fullName evidence="1">PLP-independent amino acid racemase</fullName>
    </alternativeName>
</protein>
<proteinExistence type="inferred from homology"/>
<comment type="function">
    <text evidence="1">Catalyzes the stereoinversion of LL-2,6-diaminopimelate (L,L-DAP) to meso-diaminopimelate (meso-DAP), a precursor of L-lysine and an essential component of the bacterial peptidoglycan.</text>
</comment>
<comment type="catalytic activity">
    <reaction evidence="1">
        <text>(2S,6S)-2,6-diaminopimelate = meso-2,6-diaminopimelate</text>
        <dbReference type="Rhea" id="RHEA:15393"/>
        <dbReference type="ChEBI" id="CHEBI:57609"/>
        <dbReference type="ChEBI" id="CHEBI:57791"/>
        <dbReference type="EC" id="5.1.1.7"/>
    </reaction>
</comment>
<comment type="pathway">
    <text evidence="1">Amino-acid biosynthesis; L-lysine biosynthesis via DAP pathway; DL-2,6-diaminopimelate from LL-2,6-diaminopimelate: step 1/1.</text>
</comment>
<comment type="subunit">
    <text evidence="1">Homodimer.</text>
</comment>
<comment type="subcellular location">
    <subcellularLocation>
        <location evidence="1">Cytoplasm</location>
    </subcellularLocation>
</comment>
<comment type="similarity">
    <text evidence="1">Belongs to the diaminopimelate epimerase family.</text>
</comment>
<keyword id="KW-0028">Amino-acid biosynthesis</keyword>
<keyword id="KW-0963">Cytoplasm</keyword>
<keyword id="KW-0413">Isomerase</keyword>
<keyword id="KW-0457">Lysine biosynthesis</keyword>
<dbReference type="EC" id="5.1.1.7" evidence="1"/>
<dbReference type="EMBL" id="CP000485">
    <property type="protein sequence ID" value="ABK87670.1"/>
    <property type="molecule type" value="Genomic_DNA"/>
</dbReference>
<dbReference type="RefSeq" id="WP_000077388.1">
    <property type="nucleotide sequence ID" value="NC_008600.1"/>
</dbReference>
<dbReference type="SMR" id="A0RKC7"/>
<dbReference type="KEGG" id="btl:BALH_4473"/>
<dbReference type="HOGENOM" id="CLU_053306_3_0_9"/>
<dbReference type="UniPathway" id="UPA00034">
    <property type="reaction ID" value="UER00025"/>
</dbReference>
<dbReference type="GO" id="GO:0005829">
    <property type="term" value="C:cytosol"/>
    <property type="evidence" value="ECO:0007669"/>
    <property type="project" value="TreeGrafter"/>
</dbReference>
<dbReference type="GO" id="GO:0008837">
    <property type="term" value="F:diaminopimelate epimerase activity"/>
    <property type="evidence" value="ECO:0007669"/>
    <property type="project" value="UniProtKB-UniRule"/>
</dbReference>
<dbReference type="GO" id="GO:0009089">
    <property type="term" value="P:lysine biosynthetic process via diaminopimelate"/>
    <property type="evidence" value="ECO:0007669"/>
    <property type="project" value="UniProtKB-UniRule"/>
</dbReference>
<dbReference type="FunFam" id="3.10.310.10:FF:000004">
    <property type="entry name" value="Diaminopimelate epimerase"/>
    <property type="match status" value="1"/>
</dbReference>
<dbReference type="FunFam" id="3.10.310.10:FF:000006">
    <property type="entry name" value="Diaminopimelate epimerase"/>
    <property type="match status" value="1"/>
</dbReference>
<dbReference type="Gene3D" id="3.10.310.10">
    <property type="entry name" value="Diaminopimelate Epimerase, Chain A, domain 1"/>
    <property type="match status" value="2"/>
</dbReference>
<dbReference type="HAMAP" id="MF_00197">
    <property type="entry name" value="DAP_epimerase"/>
    <property type="match status" value="1"/>
</dbReference>
<dbReference type="InterPro" id="IPR018510">
    <property type="entry name" value="DAP_epimerase_AS"/>
</dbReference>
<dbReference type="InterPro" id="IPR001653">
    <property type="entry name" value="DAP_epimerase_DapF"/>
</dbReference>
<dbReference type="NCBIfam" id="TIGR00652">
    <property type="entry name" value="DapF"/>
    <property type="match status" value="1"/>
</dbReference>
<dbReference type="PANTHER" id="PTHR31689:SF0">
    <property type="entry name" value="DIAMINOPIMELATE EPIMERASE"/>
    <property type="match status" value="1"/>
</dbReference>
<dbReference type="PANTHER" id="PTHR31689">
    <property type="entry name" value="DIAMINOPIMELATE EPIMERASE, CHLOROPLASTIC"/>
    <property type="match status" value="1"/>
</dbReference>
<dbReference type="Pfam" id="PF01678">
    <property type="entry name" value="DAP_epimerase"/>
    <property type="match status" value="2"/>
</dbReference>
<dbReference type="SUPFAM" id="SSF54506">
    <property type="entry name" value="Diaminopimelate epimerase-like"/>
    <property type="match status" value="1"/>
</dbReference>
<dbReference type="PROSITE" id="PS01326">
    <property type="entry name" value="DAP_EPIMERASE"/>
    <property type="match status" value="1"/>
</dbReference>